<protein>
    <recommendedName>
        <fullName evidence="1">Elongation factor P</fullName>
        <shortName evidence="1">EF-P</shortName>
    </recommendedName>
</protein>
<name>EFP_FLAPJ</name>
<keyword id="KW-0963">Cytoplasm</keyword>
<keyword id="KW-0251">Elongation factor</keyword>
<keyword id="KW-0648">Protein biosynthesis</keyword>
<keyword id="KW-1185">Reference proteome</keyword>
<sequence length="187" mass="20685">MASTSDIRNGLCIKFNHDIYKIIEFLHVKPGKGPAFVRTKLRSLSNGKVLDNTFSAGHKIDEVRVETHTYQYLYAEGDQFHFMNIESFEQITLDKKILDNPGLLKEGTNVMVQVNTETDLPLSVDMPASIILEVTYAEPGVKGNTATNATKSATVETGASINVPLFINEGDKIKIDTASGSYMERVK</sequence>
<gene>
    <name evidence="1" type="primary">efp</name>
    <name type="ordered locus">FP0975</name>
</gene>
<feature type="chain" id="PRO_1000010743" description="Elongation factor P">
    <location>
        <begin position="1"/>
        <end position="187"/>
    </location>
</feature>
<organism>
    <name type="scientific">Flavobacterium psychrophilum (strain ATCC 49511 / DSM 21280 / CIP 103535 / JIP02/86)</name>
    <dbReference type="NCBI Taxonomy" id="402612"/>
    <lineage>
        <taxon>Bacteria</taxon>
        <taxon>Pseudomonadati</taxon>
        <taxon>Bacteroidota</taxon>
        <taxon>Flavobacteriia</taxon>
        <taxon>Flavobacteriales</taxon>
        <taxon>Flavobacteriaceae</taxon>
        <taxon>Flavobacterium</taxon>
    </lineage>
</organism>
<comment type="function">
    <text evidence="1">Involved in peptide bond synthesis. Stimulates efficient translation and peptide-bond synthesis on native or reconstituted 70S ribosomes in vitro. Probably functions indirectly by altering the affinity of the ribosome for aminoacyl-tRNA, thus increasing their reactivity as acceptors for peptidyl transferase.</text>
</comment>
<comment type="pathway">
    <text evidence="1">Protein biosynthesis; polypeptide chain elongation.</text>
</comment>
<comment type="subcellular location">
    <subcellularLocation>
        <location evidence="1">Cytoplasm</location>
    </subcellularLocation>
</comment>
<comment type="similarity">
    <text evidence="1">Belongs to the elongation factor P family.</text>
</comment>
<proteinExistence type="inferred from homology"/>
<accession>A6GY96</accession>
<dbReference type="EMBL" id="AM398681">
    <property type="protein sequence ID" value="CAL43069.1"/>
    <property type="molecule type" value="Genomic_DNA"/>
</dbReference>
<dbReference type="RefSeq" id="WP_011963122.1">
    <property type="nucleotide sequence ID" value="NC_009613.3"/>
</dbReference>
<dbReference type="RefSeq" id="YP_001295882.1">
    <property type="nucleotide sequence ID" value="NC_009613.3"/>
</dbReference>
<dbReference type="SMR" id="A6GY96"/>
<dbReference type="STRING" id="402612.FP0975"/>
<dbReference type="EnsemblBacteria" id="CAL43069">
    <property type="protein sequence ID" value="CAL43069"/>
    <property type="gene ID" value="FP0975"/>
</dbReference>
<dbReference type="GeneID" id="66552373"/>
<dbReference type="KEGG" id="fps:FP0975"/>
<dbReference type="PATRIC" id="fig|402612.5.peg.987"/>
<dbReference type="eggNOG" id="COG0231">
    <property type="taxonomic scope" value="Bacteria"/>
</dbReference>
<dbReference type="HOGENOM" id="CLU_074944_0_1_10"/>
<dbReference type="OrthoDB" id="9801844at2"/>
<dbReference type="UniPathway" id="UPA00345"/>
<dbReference type="Proteomes" id="UP000006394">
    <property type="component" value="Chromosome"/>
</dbReference>
<dbReference type="GO" id="GO:0005737">
    <property type="term" value="C:cytoplasm"/>
    <property type="evidence" value="ECO:0007669"/>
    <property type="project" value="UniProtKB-SubCell"/>
</dbReference>
<dbReference type="GO" id="GO:0003746">
    <property type="term" value="F:translation elongation factor activity"/>
    <property type="evidence" value="ECO:0007669"/>
    <property type="project" value="UniProtKB-UniRule"/>
</dbReference>
<dbReference type="GO" id="GO:0043043">
    <property type="term" value="P:peptide biosynthetic process"/>
    <property type="evidence" value="ECO:0007669"/>
    <property type="project" value="InterPro"/>
</dbReference>
<dbReference type="CDD" id="cd04470">
    <property type="entry name" value="S1_EF-P_repeat_1"/>
    <property type="match status" value="1"/>
</dbReference>
<dbReference type="CDD" id="cd05794">
    <property type="entry name" value="S1_EF-P_repeat_2"/>
    <property type="match status" value="1"/>
</dbReference>
<dbReference type="FunFam" id="2.30.30.30:FF:000003">
    <property type="entry name" value="Elongation factor P"/>
    <property type="match status" value="1"/>
</dbReference>
<dbReference type="FunFam" id="2.40.50.140:FF:000004">
    <property type="entry name" value="Elongation factor P"/>
    <property type="match status" value="1"/>
</dbReference>
<dbReference type="Gene3D" id="2.30.30.30">
    <property type="match status" value="1"/>
</dbReference>
<dbReference type="Gene3D" id="2.40.50.140">
    <property type="entry name" value="Nucleic acid-binding proteins"/>
    <property type="match status" value="2"/>
</dbReference>
<dbReference type="HAMAP" id="MF_00141">
    <property type="entry name" value="EF_P"/>
    <property type="match status" value="1"/>
</dbReference>
<dbReference type="InterPro" id="IPR015365">
    <property type="entry name" value="Elong-fact-P_C"/>
</dbReference>
<dbReference type="InterPro" id="IPR012340">
    <property type="entry name" value="NA-bd_OB-fold"/>
</dbReference>
<dbReference type="InterPro" id="IPR014722">
    <property type="entry name" value="Rib_uL2_dom2"/>
</dbReference>
<dbReference type="InterPro" id="IPR020599">
    <property type="entry name" value="Transl_elong_fac_P/YeiP"/>
</dbReference>
<dbReference type="InterPro" id="IPR013185">
    <property type="entry name" value="Transl_elong_KOW-like"/>
</dbReference>
<dbReference type="InterPro" id="IPR001059">
    <property type="entry name" value="Transl_elong_P/YeiP_cen"/>
</dbReference>
<dbReference type="InterPro" id="IPR013852">
    <property type="entry name" value="Transl_elong_P/YeiP_CS"/>
</dbReference>
<dbReference type="InterPro" id="IPR011768">
    <property type="entry name" value="Transl_elongation_fac_P"/>
</dbReference>
<dbReference type="InterPro" id="IPR008991">
    <property type="entry name" value="Translation_prot_SH3-like_sf"/>
</dbReference>
<dbReference type="NCBIfam" id="TIGR00038">
    <property type="entry name" value="efp"/>
    <property type="match status" value="1"/>
</dbReference>
<dbReference type="NCBIfam" id="NF001810">
    <property type="entry name" value="PRK00529.1"/>
    <property type="match status" value="1"/>
</dbReference>
<dbReference type="PANTHER" id="PTHR30053">
    <property type="entry name" value="ELONGATION FACTOR P"/>
    <property type="match status" value="1"/>
</dbReference>
<dbReference type="PANTHER" id="PTHR30053:SF12">
    <property type="entry name" value="ELONGATION FACTOR P (EF-P) FAMILY PROTEIN"/>
    <property type="match status" value="1"/>
</dbReference>
<dbReference type="Pfam" id="PF01132">
    <property type="entry name" value="EFP"/>
    <property type="match status" value="1"/>
</dbReference>
<dbReference type="Pfam" id="PF08207">
    <property type="entry name" value="EFP_N"/>
    <property type="match status" value="1"/>
</dbReference>
<dbReference type="Pfam" id="PF09285">
    <property type="entry name" value="Elong-fact-P_C"/>
    <property type="match status" value="1"/>
</dbReference>
<dbReference type="PIRSF" id="PIRSF005901">
    <property type="entry name" value="EF-P"/>
    <property type="match status" value="1"/>
</dbReference>
<dbReference type="SMART" id="SM01185">
    <property type="entry name" value="EFP"/>
    <property type="match status" value="1"/>
</dbReference>
<dbReference type="SMART" id="SM00841">
    <property type="entry name" value="Elong-fact-P_C"/>
    <property type="match status" value="1"/>
</dbReference>
<dbReference type="SUPFAM" id="SSF50249">
    <property type="entry name" value="Nucleic acid-binding proteins"/>
    <property type="match status" value="2"/>
</dbReference>
<dbReference type="SUPFAM" id="SSF50104">
    <property type="entry name" value="Translation proteins SH3-like domain"/>
    <property type="match status" value="1"/>
</dbReference>
<dbReference type="PROSITE" id="PS01275">
    <property type="entry name" value="EFP"/>
    <property type="match status" value="1"/>
</dbReference>
<reference key="1">
    <citation type="journal article" date="2007" name="Nat. Biotechnol.">
        <title>Complete genome sequence of the fish pathogen Flavobacterium psychrophilum.</title>
        <authorList>
            <person name="Duchaud E."/>
            <person name="Boussaha M."/>
            <person name="Loux V."/>
            <person name="Bernardet J.-F."/>
            <person name="Michel C."/>
            <person name="Kerouault B."/>
            <person name="Mondot S."/>
            <person name="Nicolas P."/>
            <person name="Bossy R."/>
            <person name="Caron C."/>
            <person name="Bessieres P."/>
            <person name="Gibrat J.-F."/>
            <person name="Claverol S."/>
            <person name="Dumetz F."/>
            <person name="Le Henaff M."/>
            <person name="Benmansour A."/>
        </authorList>
    </citation>
    <scope>NUCLEOTIDE SEQUENCE [LARGE SCALE GENOMIC DNA]</scope>
    <source>
        <strain>ATCC 49511 / DSM 21280 / CIP 103535 / JIP02/86</strain>
    </source>
</reference>
<evidence type="ECO:0000255" key="1">
    <source>
        <dbReference type="HAMAP-Rule" id="MF_00141"/>
    </source>
</evidence>